<accession>P0A2F1</accession>
<accession>P37401</accession>
<proteinExistence type="inferred from homology"/>
<reference key="1">
    <citation type="journal article" date="2001" name="Nature">
        <title>Complete genome sequence of a multiple drug resistant Salmonella enterica serovar Typhi CT18.</title>
        <authorList>
            <person name="Parkhill J."/>
            <person name="Dougan G."/>
            <person name="James K.D."/>
            <person name="Thomson N.R."/>
            <person name="Pickard D."/>
            <person name="Wain J."/>
            <person name="Churcher C.M."/>
            <person name="Mungall K.L."/>
            <person name="Bentley S.D."/>
            <person name="Holden M.T.G."/>
            <person name="Sebaihia M."/>
            <person name="Baker S."/>
            <person name="Basham D."/>
            <person name="Brooks K."/>
            <person name="Chillingworth T."/>
            <person name="Connerton P."/>
            <person name="Cronin A."/>
            <person name="Davis P."/>
            <person name="Davies R.M."/>
            <person name="Dowd L."/>
            <person name="White N."/>
            <person name="Farrar J."/>
            <person name="Feltwell T."/>
            <person name="Hamlin N."/>
            <person name="Haque A."/>
            <person name="Hien T.T."/>
            <person name="Holroyd S."/>
            <person name="Jagels K."/>
            <person name="Krogh A."/>
            <person name="Larsen T.S."/>
            <person name="Leather S."/>
            <person name="Moule S."/>
            <person name="O'Gaora P."/>
            <person name="Parry C."/>
            <person name="Quail M.A."/>
            <person name="Rutherford K.M."/>
            <person name="Simmonds M."/>
            <person name="Skelton J."/>
            <person name="Stevens K."/>
            <person name="Whitehead S."/>
            <person name="Barrell B.G."/>
        </authorList>
    </citation>
    <scope>NUCLEOTIDE SEQUENCE [LARGE SCALE GENOMIC DNA]</scope>
    <source>
        <strain>CT18</strain>
    </source>
</reference>
<reference key="2">
    <citation type="journal article" date="2003" name="J. Bacteriol.">
        <title>Comparative genomics of Salmonella enterica serovar Typhi strains Ty2 and CT18.</title>
        <authorList>
            <person name="Deng W."/>
            <person name="Liou S.-R."/>
            <person name="Plunkett G. III"/>
            <person name="Mayhew G.F."/>
            <person name="Rose D.J."/>
            <person name="Burland V."/>
            <person name="Kodoyianni V."/>
            <person name="Schwartz D.C."/>
            <person name="Blattner F.R."/>
        </authorList>
    </citation>
    <scope>NUCLEOTIDE SEQUENCE [LARGE SCALE GENOMIC DNA]</scope>
    <source>
        <strain>ATCC 700931 / Ty2</strain>
    </source>
</reference>
<organism>
    <name type="scientific">Salmonella typhi</name>
    <dbReference type="NCBI Taxonomy" id="90370"/>
    <lineage>
        <taxon>Bacteria</taxon>
        <taxon>Pseudomonadati</taxon>
        <taxon>Pseudomonadota</taxon>
        <taxon>Gammaproteobacteria</taxon>
        <taxon>Enterobacterales</taxon>
        <taxon>Enterobacteriaceae</taxon>
        <taxon>Salmonella</taxon>
    </lineage>
</organism>
<evidence type="ECO:0000250" key="1"/>
<evidence type="ECO:0000305" key="2"/>
<comment type="function">
    <text evidence="1">Sigma factors are initiation factors that promote the attachment of RNA polymerase (RNAP) to specific initiation sites and are then released. Extracytoplasmic function (ECF) sigma-E controls the envelope stress response, responding to periplasmic protein stress, increased levels of periplasmic lipopolysaccharide (LPS) as well as acid stress, heat shock and oxidative stress; it controls protein processing in the extracytoplasmic compartment (By similarity).</text>
</comment>
<comment type="activity regulation">
    <text evidence="1">ECF sigma-E is held in an inactive form by its cognate anti-sigma factor (RseA) until released by regulated intramembrane proteolysis (RIP). RIP occurs when an extracytoplasmic signal (periplasmic stress and excess LPS) triggers a concerted proteolytic cascade to transmit information and elicit cellular responses. The anti-sigma factor RseA is an inner membrane protein, binding sigma-E in the cytoplasm and RseB in the periplasm. RseA is first cut extracytoplasmically (site-1 protease, S1P, by DegS), then within the membrane itself (site-2 protease, S2P, by RseP), while cytoplasmic proteases (predominantly ClpX-ClpP) finish degrading the regulatory protein, liberating sigma-E. Degradation of RseA requires 2 signals to activate DegS; an outer membrane protein (OMP) signal activates DegS, while an LPS signal causes release of RseB from RseA, freeing RseA to be cleaved (By similarity).</text>
</comment>
<comment type="subunit">
    <text evidence="1">Interacts transiently with the RNAP catalytic core formed by RpoA, RpoB, RpoC and RpoZ (2 alpha, 1 beta, 1 beta' and 1 omega subunit) to form the RNAP holoenzyme that can initiate transcription. Interacts 1:1 with anti-sigma-E factor RseA which prevents binding to RNAP catalytic core (By similarity).</text>
</comment>
<comment type="subcellular location">
    <subcellularLocation>
        <location evidence="1">Cytoplasm</location>
    </subcellularLocation>
    <text evidence="1">Associates with the inner membrane via RseA.</text>
</comment>
<comment type="domain">
    <text evidence="1">The sigma-70 factor domain-2 mediates sequence-specific interaction with the -10 element in promoter DNA, and plays an important role in melting the double-stranded DNA and the formation of the transcription bubble. The sigma-70 factor domain-2 mediates interaction with the RNA polymerase subunits RpoB and RpoC (By similarity).</text>
</comment>
<comment type="domain">
    <text evidence="1">The sigma-70 factor domain-4 contains a helix-turn-helix (H-T-H) motif that mediates interaction with the -35 element in promoter DNA. The domain also mediates interaction with the RNA polymerase subunit RpoA. Interactions between sigma-70 factor domain-4 and anti-sigma factors prevents interaction of sigma factors with the RNA polymerase catalytic core (By similarity).</text>
</comment>
<comment type="similarity">
    <text evidence="2">Belongs to the sigma-70 factor family. ECF subfamily.</text>
</comment>
<sequence>MSEQLTDQVLVERVQKGDQKAFNLLVVRYQHKVASLVSRYVPSGDVPDVVQESFIKAYRALDSFRGDSAFYTWLYRIAVNTAKNYLVAQGRRPPSSDVDAIEAENFESGGALKEISNPENLMLSEELRQIVFRTIESLPEDLRMAITLRELDGLSYEEIAAIMDCPVGTVRSRIFRAREAIDNKVQPLIRR</sequence>
<protein>
    <recommendedName>
        <fullName>ECF RNA polymerase sigma-E factor</fullName>
    </recommendedName>
    <alternativeName>
        <fullName>RNA polymerase sigma-E factor</fullName>
    </alternativeName>
    <alternativeName>
        <fullName>Sigma-24</fullName>
    </alternativeName>
</protein>
<dbReference type="EMBL" id="AL513382">
    <property type="protein sequence ID" value="CAD02789.1"/>
    <property type="molecule type" value="Genomic_DNA"/>
</dbReference>
<dbReference type="EMBL" id="AE014613">
    <property type="protein sequence ID" value="AAO67995.1"/>
    <property type="molecule type" value="Genomic_DNA"/>
</dbReference>
<dbReference type="RefSeq" id="NP_457116.1">
    <property type="nucleotide sequence ID" value="NC_003198.1"/>
</dbReference>
<dbReference type="RefSeq" id="WP_000003307.1">
    <property type="nucleotide sequence ID" value="NZ_WSUR01000007.1"/>
</dbReference>
<dbReference type="BMRB" id="P0A2F1"/>
<dbReference type="SMR" id="P0A2F1"/>
<dbReference type="STRING" id="220341.gene:17586723"/>
<dbReference type="GeneID" id="92972160"/>
<dbReference type="KEGG" id="stt:t0270"/>
<dbReference type="KEGG" id="sty:STY2833"/>
<dbReference type="PATRIC" id="fig|220341.7.peg.2881"/>
<dbReference type="eggNOG" id="COG1595">
    <property type="taxonomic scope" value="Bacteria"/>
</dbReference>
<dbReference type="HOGENOM" id="CLU_047691_3_0_6"/>
<dbReference type="OMA" id="QFYTWLY"/>
<dbReference type="OrthoDB" id="9780326at2"/>
<dbReference type="Proteomes" id="UP000000541">
    <property type="component" value="Chromosome"/>
</dbReference>
<dbReference type="Proteomes" id="UP000002670">
    <property type="component" value="Chromosome"/>
</dbReference>
<dbReference type="GO" id="GO:0005737">
    <property type="term" value="C:cytoplasm"/>
    <property type="evidence" value="ECO:0007669"/>
    <property type="project" value="UniProtKB-SubCell"/>
</dbReference>
<dbReference type="GO" id="GO:0003677">
    <property type="term" value="F:DNA binding"/>
    <property type="evidence" value="ECO:0007669"/>
    <property type="project" value="UniProtKB-KW"/>
</dbReference>
<dbReference type="GO" id="GO:0016987">
    <property type="term" value="F:sigma factor activity"/>
    <property type="evidence" value="ECO:0007669"/>
    <property type="project" value="UniProtKB-KW"/>
</dbReference>
<dbReference type="GO" id="GO:0006352">
    <property type="term" value="P:DNA-templated transcription initiation"/>
    <property type="evidence" value="ECO:0007669"/>
    <property type="project" value="InterPro"/>
</dbReference>
<dbReference type="CDD" id="cd06171">
    <property type="entry name" value="Sigma70_r4"/>
    <property type="match status" value="1"/>
</dbReference>
<dbReference type="FunFam" id="1.10.10.10:FF:000043">
    <property type="entry name" value="RNA polymerase sigma factor"/>
    <property type="match status" value="1"/>
</dbReference>
<dbReference type="FunFam" id="1.10.1740.10:FF:000001">
    <property type="entry name" value="RNA polymerase sigma factor"/>
    <property type="match status" value="1"/>
</dbReference>
<dbReference type="Gene3D" id="1.10.1740.10">
    <property type="match status" value="1"/>
</dbReference>
<dbReference type="Gene3D" id="1.10.10.10">
    <property type="entry name" value="Winged helix-like DNA-binding domain superfamily/Winged helix DNA-binding domain"/>
    <property type="match status" value="1"/>
</dbReference>
<dbReference type="InterPro" id="IPR039425">
    <property type="entry name" value="RNA_pol_sigma-70-like"/>
</dbReference>
<dbReference type="InterPro" id="IPR014284">
    <property type="entry name" value="RNA_pol_sigma-70_dom"/>
</dbReference>
<dbReference type="InterPro" id="IPR000838">
    <property type="entry name" value="RNA_pol_sigma70_ECF_CS"/>
</dbReference>
<dbReference type="InterPro" id="IPR007627">
    <property type="entry name" value="RNA_pol_sigma70_r2"/>
</dbReference>
<dbReference type="InterPro" id="IPR013249">
    <property type="entry name" value="RNA_pol_sigma70_r4_t2"/>
</dbReference>
<dbReference type="InterPro" id="IPR014286">
    <property type="entry name" value="RNA_pol_sigma70_RpoE"/>
</dbReference>
<dbReference type="InterPro" id="IPR013325">
    <property type="entry name" value="RNA_pol_sigma_r2"/>
</dbReference>
<dbReference type="InterPro" id="IPR013324">
    <property type="entry name" value="RNA_pol_sigma_r3/r4-like"/>
</dbReference>
<dbReference type="InterPro" id="IPR036388">
    <property type="entry name" value="WH-like_DNA-bd_sf"/>
</dbReference>
<dbReference type="NCBIfam" id="TIGR02939">
    <property type="entry name" value="RpoE_Sigma70"/>
    <property type="match status" value="1"/>
</dbReference>
<dbReference type="NCBIfam" id="TIGR02937">
    <property type="entry name" value="sigma70-ECF"/>
    <property type="match status" value="1"/>
</dbReference>
<dbReference type="PANTHER" id="PTHR43133:SF53">
    <property type="entry name" value="ECF RNA POLYMERASE SIGMA-E FACTOR"/>
    <property type="match status" value="1"/>
</dbReference>
<dbReference type="PANTHER" id="PTHR43133">
    <property type="entry name" value="RNA POLYMERASE ECF-TYPE SIGMA FACTO"/>
    <property type="match status" value="1"/>
</dbReference>
<dbReference type="Pfam" id="PF04542">
    <property type="entry name" value="Sigma70_r2"/>
    <property type="match status" value="1"/>
</dbReference>
<dbReference type="Pfam" id="PF08281">
    <property type="entry name" value="Sigma70_r4_2"/>
    <property type="match status" value="1"/>
</dbReference>
<dbReference type="SUPFAM" id="SSF88946">
    <property type="entry name" value="Sigma2 domain of RNA polymerase sigma factors"/>
    <property type="match status" value="1"/>
</dbReference>
<dbReference type="SUPFAM" id="SSF88659">
    <property type="entry name" value="Sigma3 and sigma4 domains of RNA polymerase sigma factors"/>
    <property type="match status" value="1"/>
</dbReference>
<dbReference type="PROSITE" id="PS01063">
    <property type="entry name" value="SIGMA70_ECF"/>
    <property type="match status" value="1"/>
</dbReference>
<gene>
    <name type="primary">rpoE</name>
    <name type="synonym">sigE</name>
    <name type="ordered locus">STY2833</name>
    <name type="ordered locus">t0270</name>
</gene>
<name>RPOE_SALTI</name>
<feature type="chain" id="PRO_0000094000" description="ECF RNA polymerase sigma-E factor">
    <location>
        <begin position="1"/>
        <end position="191"/>
    </location>
</feature>
<feature type="DNA-binding region" description="H-T-H motif" evidence="1">
    <location>
        <begin position="156"/>
        <end position="175"/>
    </location>
</feature>
<feature type="region of interest" description="Binds RNAP core" evidence="1">
    <location>
        <begin position="1"/>
        <end position="153"/>
    </location>
</feature>
<feature type="region of interest" description="Sigma-70 factor domain-2" evidence="1">
    <location>
        <begin position="25"/>
        <end position="92"/>
    </location>
</feature>
<feature type="region of interest" description="Sigma-70 factor domain-4" evidence="1">
    <location>
        <begin position="129"/>
        <end position="180"/>
    </location>
</feature>
<feature type="short sequence motif" description="Polymerase core binding" evidence="1">
    <location>
        <begin position="48"/>
        <end position="61"/>
    </location>
</feature>
<keyword id="KW-0963">Cytoplasm</keyword>
<keyword id="KW-0238">DNA-binding</keyword>
<keyword id="KW-0731">Sigma factor</keyword>
<keyword id="KW-0346">Stress response</keyword>
<keyword id="KW-0804">Transcription</keyword>
<keyword id="KW-0805">Transcription regulation</keyword>